<gene>
    <name evidence="7" type="primary">CPK15</name>
    <name evidence="10" type="ordered locus">Os05g0585500</name>
    <name evidence="8" type="ordered locus">LOC_Os05g50810</name>
    <name evidence="9" type="ORF">OSJNBa0009C07.9</name>
</gene>
<keyword id="KW-0067">ATP-binding</keyword>
<keyword id="KW-0106">Calcium</keyword>
<keyword id="KW-0418">Kinase</keyword>
<keyword id="KW-0449">Lipoprotein</keyword>
<keyword id="KW-0472">Membrane</keyword>
<keyword id="KW-0479">Metal-binding</keyword>
<keyword id="KW-0519">Myristate</keyword>
<keyword id="KW-0547">Nucleotide-binding</keyword>
<keyword id="KW-1185">Reference proteome</keyword>
<keyword id="KW-0677">Repeat</keyword>
<keyword id="KW-0723">Serine/threonine-protein kinase</keyword>
<keyword id="KW-0808">Transferase</keyword>
<dbReference type="EC" id="2.7.11.1" evidence="8"/>
<dbReference type="EMBL" id="AC137608">
    <property type="protein sequence ID" value="AAT47064.1"/>
    <property type="molecule type" value="Genomic_DNA"/>
</dbReference>
<dbReference type="EMBL" id="AP008211">
    <property type="protein sequence ID" value="BAF18369.1"/>
    <property type="molecule type" value="Genomic_DNA"/>
</dbReference>
<dbReference type="EMBL" id="AP014961">
    <property type="protein sequence ID" value="BAS95568.1"/>
    <property type="molecule type" value="Genomic_DNA"/>
</dbReference>
<dbReference type="SMR" id="Q6I587"/>
<dbReference type="FunCoup" id="Q6I587">
    <property type="interactions" value="2921"/>
</dbReference>
<dbReference type="STRING" id="39947.Q6I587"/>
<dbReference type="PaxDb" id="39947-Q6I587"/>
<dbReference type="EnsemblPlants" id="Os05t0585500-01">
    <property type="protein sequence ID" value="Os05t0585500-01"/>
    <property type="gene ID" value="Os05g0585500"/>
</dbReference>
<dbReference type="Gramene" id="Os05t0585500-01">
    <property type="protein sequence ID" value="Os05t0585500-01"/>
    <property type="gene ID" value="Os05g0585500"/>
</dbReference>
<dbReference type="KEGG" id="dosa:Os05g0585500"/>
<dbReference type="eggNOG" id="KOG0032">
    <property type="taxonomic scope" value="Eukaryota"/>
</dbReference>
<dbReference type="HOGENOM" id="CLU_000288_37_3_1"/>
<dbReference type="InParanoid" id="Q6I587"/>
<dbReference type="OMA" id="TCVAYQL"/>
<dbReference type="Proteomes" id="UP000000763">
    <property type="component" value="Chromosome 5"/>
</dbReference>
<dbReference type="Proteomes" id="UP000059680">
    <property type="component" value="Chromosome 5"/>
</dbReference>
<dbReference type="GO" id="GO:0005737">
    <property type="term" value="C:cytoplasm"/>
    <property type="evidence" value="ECO:0000318"/>
    <property type="project" value="GO_Central"/>
</dbReference>
<dbReference type="GO" id="GO:0016020">
    <property type="term" value="C:membrane"/>
    <property type="evidence" value="ECO:0007669"/>
    <property type="project" value="UniProtKB-SubCell"/>
</dbReference>
<dbReference type="GO" id="GO:0005634">
    <property type="term" value="C:nucleus"/>
    <property type="evidence" value="ECO:0000318"/>
    <property type="project" value="GO_Central"/>
</dbReference>
<dbReference type="GO" id="GO:0005524">
    <property type="term" value="F:ATP binding"/>
    <property type="evidence" value="ECO:0007669"/>
    <property type="project" value="UniProtKB-KW"/>
</dbReference>
<dbReference type="GO" id="GO:0005509">
    <property type="term" value="F:calcium ion binding"/>
    <property type="evidence" value="ECO:0007669"/>
    <property type="project" value="InterPro"/>
</dbReference>
<dbReference type="GO" id="GO:0009931">
    <property type="term" value="F:calcium-dependent protein serine/threonine kinase activity"/>
    <property type="evidence" value="ECO:0000318"/>
    <property type="project" value="GO_Central"/>
</dbReference>
<dbReference type="GO" id="GO:0004683">
    <property type="term" value="F:calcium/calmodulin-dependent protein kinase activity"/>
    <property type="evidence" value="ECO:0000318"/>
    <property type="project" value="GO_Central"/>
</dbReference>
<dbReference type="GO" id="GO:0005516">
    <property type="term" value="F:calmodulin binding"/>
    <property type="evidence" value="ECO:0000318"/>
    <property type="project" value="GO_Central"/>
</dbReference>
<dbReference type="GO" id="GO:0106310">
    <property type="term" value="F:protein serine kinase activity"/>
    <property type="evidence" value="ECO:0007669"/>
    <property type="project" value="RHEA"/>
</dbReference>
<dbReference type="GO" id="GO:0035556">
    <property type="term" value="P:intracellular signal transduction"/>
    <property type="evidence" value="ECO:0000318"/>
    <property type="project" value="GO_Central"/>
</dbReference>
<dbReference type="CDD" id="cd00051">
    <property type="entry name" value="EFh"/>
    <property type="match status" value="1"/>
</dbReference>
<dbReference type="CDD" id="cd05117">
    <property type="entry name" value="STKc_CAMK"/>
    <property type="match status" value="1"/>
</dbReference>
<dbReference type="FunFam" id="1.10.238.10:FF:000015">
    <property type="entry name" value="Calcium-dependent protein kinase 1"/>
    <property type="match status" value="1"/>
</dbReference>
<dbReference type="FunFam" id="3.30.200.20:FF:000004">
    <property type="entry name" value="Calcium-dependent protein kinase 1"/>
    <property type="match status" value="1"/>
</dbReference>
<dbReference type="FunFam" id="1.10.510.10:FF:000056">
    <property type="entry name" value="calcium-dependent protein kinase 1"/>
    <property type="match status" value="1"/>
</dbReference>
<dbReference type="Gene3D" id="1.10.238.10">
    <property type="entry name" value="EF-hand"/>
    <property type="match status" value="1"/>
</dbReference>
<dbReference type="Gene3D" id="3.30.200.20">
    <property type="entry name" value="Phosphorylase Kinase, domain 1"/>
    <property type="match status" value="1"/>
</dbReference>
<dbReference type="Gene3D" id="1.10.510.10">
    <property type="entry name" value="Transferase(Phosphotransferase) domain 1"/>
    <property type="match status" value="1"/>
</dbReference>
<dbReference type="InterPro" id="IPR050205">
    <property type="entry name" value="CDPK_Ser/Thr_kinases"/>
</dbReference>
<dbReference type="InterPro" id="IPR011992">
    <property type="entry name" value="EF-hand-dom_pair"/>
</dbReference>
<dbReference type="InterPro" id="IPR018247">
    <property type="entry name" value="EF_Hand_1_Ca_BS"/>
</dbReference>
<dbReference type="InterPro" id="IPR002048">
    <property type="entry name" value="EF_hand_dom"/>
</dbReference>
<dbReference type="InterPro" id="IPR011009">
    <property type="entry name" value="Kinase-like_dom_sf"/>
</dbReference>
<dbReference type="InterPro" id="IPR000719">
    <property type="entry name" value="Prot_kinase_dom"/>
</dbReference>
<dbReference type="InterPro" id="IPR017441">
    <property type="entry name" value="Protein_kinase_ATP_BS"/>
</dbReference>
<dbReference type="InterPro" id="IPR008271">
    <property type="entry name" value="Ser/Thr_kinase_AS"/>
</dbReference>
<dbReference type="PANTHER" id="PTHR24349">
    <property type="entry name" value="SERINE/THREONINE-PROTEIN KINASE"/>
    <property type="match status" value="1"/>
</dbReference>
<dbReference type="Pfam" id="PF13499">
    <property type="entry name" value="EF-hand_7"/>
    <property type="match status" value="2"/>
</dbReference>
<dbReference type="Pfam" id="PF00069">
    <property type="entry name" value="Pkinase"/>
    <property type="match status" value="1"/>
</dbReference>
<dbReference type="SMART" id="SM00054">
    <property type="entry name" value="EFh"/>
    <property type="match status" value="4"/>
</dbReference>
<dbReference type="SMART" id="SM00220">
    <property type="entry name" value="S_TKc"/>
    <property type="match status" value="1"/>
</dbReference>
<dbReference type="SUPFAM" id="SSF47473">
    <property type="entry name" value="EF-hand"/>
    <property type="match status" value="1"/>
</dbReference>
<dbReference type="SUPFAM" id="SSF56112">
    <property type="entry name" value="Protein kinase-like (PK-like)"/>
    <property type="match status" value="1"/>
</dbReference>
<dbReference type="PROSITE" id="PS00018">
    <property type="entry name" value="EF_HAND_1"/>
    <property type="match status" value="4"/>
</dbReference>
<dbReference type="PROSITE" id="PS50222">
    <property type="entry name" value="EF_HAND_2"/>
    <property type="match status" value="4"/>
</dbReference>
<dbReference type="PROSITE" id="PS00107">
    <property type="entry name" value="PROTEIN_KINASE_ATP"/>
    <property type="match status" value="1"/>
</dbReference>
<dbReference type="PROSITE" id="PS50011">
    <property type="entry name" value="PROTEIN_KINASE_DOM"/>
    <property type="match status" value="1"/>
</dbReference>
<dbReference type="PROSITE" id="PS00108">
    <property type="entry name" value="PROTEIN_KINASE_ST"/>
    <property type="match status" value="1"/>
</dbReference>
<feature type="initiator methionine" description="Removed" evidence="2">
    <location>
        <position position="1"/>
    </location>
</feature>
<feature type="chain" id="PRO_0000437559" description="Calcium-dependent protein kinase 15">
    <location>
        <begin position="2"/>
        <end position="542"/>
    </location>
</feature>
<feature type="domain" description="Protein kinase" evidence="3">
    <location>
        <begin position="90"/>
        <end position="348"/>
    </location>
</feature>
<feature type="domain" description="EF-hand 1" evidence="4">
    <location>
        <begin position="391"/>
        <end position="426"/>
    </location>
</feature>
<feature type="domain" description="EF-hand 2" evidence="4">
    <location>
        <begin position="427"/>
        <end position="462"/>
    </location>
</feature>
<feature type="domain" description="EF-hand 3" evidence="4">
    <location>
        <begin position="463"/>
        <end position="497"/>
    </location>
</feature>
<feature type="domain" description="EF-hand 4" evidence="4">
    <location>
        <begin position="498"/>
        <end position="533"/>
    </location>
</feature>
<feature type="region of interest" description="Disordered" evidence="5">
    <location>
        <begin position="1"/>
        <end position="73"/>
    </location>
</feature>
<feature type="region of interest" description="Autoinhibitory domain" evidence="1">
    <location>
        <begin position="354"/>
        <end position="384"/>
    </location>
</feature>
<feature type="compositionally biased region" description="Low complexity" evidence="5">
    <location>
        <begin position="12"/>
        <end position="21"/>
    </location>
</feature>
<feature type="compositionally biased region" description="Basic residues" evidence="5">
    <location>
        <begin position="22"/>
        <end position="40"/>
    </location>
</feature>
<feature type="compositionally biased region" description="Pro residues" evidence="5">
    <location>
        <begin position="41"/>
        <end position="60"/>
    </location>
</feature>
<feature type="compositionally biased region" description="Low complexity" evidence="5">
    <location>
        <begin position="61"/>
        <end position="71"/>
    </location>
</feature>
<feature type="active site" description="Proton acceptor" evidence="3">
    <location>
        <position position="214"/>
    </location>
</feature>
<feature type="binding site" evidence="3">
    <location>
        <begin position="96"/>
        <end position="104"/>
    </location>
    <ligand>
        <name>ATP</name>
        <dbReference type="ChEBI" id="CHEBI:30616"/>
    </ligand>
</feature>
<feature type="binding site" evidence="3">
    <location>
        <position position="119"/>
    </location>
    <ligand>
        <name>ATP</name>
        <dbReference type="ChEBI" id="CHEBI:30616"/>
    </ligand>
</feature>
<feature type="binding site" evidence="4">
    <location>
        <position position="404"/>
    </location>
    <ligand>
        <name>Ca(2+)</name>
        <dbReference type="ChEBI" id="CHEBI:29108"/>
        <label>1</label>
    </ligand>
</feature>
<feature type="binding site" evidence="4">
    <location>
        <position position="406"/>
    </location>
    <ligand>
        <name>Ca(2+)</name>
        <dbReference type="ChEBI" id="CHEBI:29108"/>
        <label>1</label>
    </ligand>
</feature>
<feature type="binding site" evidence="4">
    <location>
        <position position="408"/>
    </location>
    <ligand>
        <name>Ca(2+)</name>
        <dbReference type="ChEBI" id="CHEBI:29108"/>
        <label>1</label>
    </ligand>
</feature>
<feature type="binding site" evidence="4">
    <location>
        <position position="410"/>
    </location>
    <ligand>
        <name>Ca(2+)</name>
        <dbReference type="ChEBI" id="CHEBI:29108"/>
        <label>1</label>
    </ligand>
</feature>
<feature type="binding site" evidence="4">
    <location>
        <position position="415"/>
    </location>
    <ligand>
        <name>Ca(2+)</name>
        <dbReference type="ChEBI" id="CHEBI:29108"/>
        <label>1</label>
    </ligand>
</feature>
<feature type="binding site" evidence="4">
    <location>
        <position position="440"/>
    </location>
    <ligand>
        <name>Ca(2+)</name>
        <dbReference type="ChEBI" id="CHEBI:29108"/>
        <label>2</label>
    </ligand>
</feature>
<feature type="binding site" evidence="4">
    <location>
        <position position="442"/>
    </location>
    <ligand>
        <name>Ca(2+)</name>
        <dbReference type="ChEBI" id="CHEBI:29108"/>
        <label>2</label>
    </ligand>
</feature>
<feature type="binding site" evidence="4">
    <location>
        <position position="444"/>
    </location>
    <ligand>
        <name>Ca(2+)</name>
        <dbReference type="ChEBI" id="CHEBI:29108"/>
        <label>2</label>
    </ligand>
</feature>
<feature type="binding site" evidence="4">
    <location>
        <position position="446"/>
    </location>
    <ligand>
        <name>Ca(2+)</name>
        <dbReference type="ChEBI" id="CHEBI:29108"/>
        <label>2</label>
    </ligand>
</feature>
<feature type="binding site" evidence="4">
    <location>
        <position position="451"/>
    </location>
    <ligand>
        <name>Ca(2+)</name>
        <dbReference type="ChEBI" id="CHEBI:29108"/>
        <label>2</label>
    </ligand>
</feature>
<feature type="binding site" evidence="4">
    <location>
        <position position="476"/>
    </location>
    <ligand>
        <name>Ca(2+)</name>
        <dbReference type="ChEBI" id="CHEBI:29108"/>
        <label>3</label>
    </ligand>
</feature>
<feature type="binding site" evidence="4">
    <location>
        <position position="478"/>
    </location>
    <ligand>
        <name>Ca(2+)</name>
        <dbReference type="ChEBI" id="CHEBI:29108"/>
        <label>3</label>
    </ligand>
</feature>
<feature type="binding site" evidence="4">
    <location>
        <position position="480"/>
    </location>
    <ligand>
        <name>Ca(2+)</name>
        <dbReference type="ChEBI" id="CHEBI:29108"/>
        <label>3</label>
    </ligand>
</feature>
<feature type="binding site" evidence="4">
    <location>
        <position position="487"/>
    </location>
    <ligand>
        <name>Ca(2+)</name>
        <dbReference type="ChEBI" id="CHEBI:29108"/>
        <label>3</label>
    </ligand>
</feature>
<feature type="binding site" evidence="4">
    <location>
        <position position="511"/>
    </location>
    <ligand>
        <name>Ca(2+)</name>
        <dbReference type="ChEBI" id="CHEBI:29108"/>
        <label>4</label>
    </ligand>
</feature>
<feature type="binding site" evidence="4">
    <location>
        <position position="513"/>
    </location>
    <ligand>
        <name>Ca(2+)</name>
        <dbReference type="ChEBI" id="CHEBI:29108"/>
        <label>4</label>
    </ligand>
</feature>
<feature type="binding site" evidence="4">
    <location>
        <position position="515"/>
    </location>
    <ligand>
        <name>Ca(2+)</name>
        <dbReference type="ChEBI" id="CHEBI:29108"/>
        <label>4</label>
    </ligand>
</feature>
<feature type="binding site" evidence="4">
    <location>
        <position position="517"/>
    </location>
    <ligand>
        <name>Ca(2+)</name>
        <dbReference type="ChEBI" id="CHEBI:29108"/>
        <label>4</label>
    </ligand>
</feature>
<feature type="binding site" evidence="4">
    <location>
        <position position="522"/>
    </location>
    <ligand>
        <name>Ca(2+)</name>
        <dbReference type="ChEBI" id="CHEBI:29108"/>
        <label>4</label>
    </ligand>
</feature>
<feature type="lipid moiety-binding region" description="N-myristoyl glycine" evidence="2">
    <location>
        <position position="2"/>
    </location>
</feature>
<evidence type="ECO:0000250" key="1">
    <source>
        <dbReference type="UniProtKB" id="Q06850"/>
    </source>
</evidence>
<evidence type="ECO:0000255" key="2"/>
<evidence type="ECO:0000255" key="3">
    <source>
        <dbReference type="PROSITE-ProRule" id="PRU00159"/>
    </source>
</evidence>
<evidence type="ECO:0000255" key="4">
    <source>
        <dbReference type="PROSITE-ProRule" id="PRU00448"/>
    </source>
</evidence>
<evidence type="ECO:0000256" key="5">
    <source>
        <dbReference type="SAM" id="MobiDB-lite"/>
    </source>
</evidence>
<evidence type="ECO:0000269" key="6">
    <source>
    </source>
</evidence>
<evidence type="ECO:0000303" key="7">
    <source>
    </source>
</evidence>
<evidence type="ECO:0000305" key="8"/>
<evidence type="ECO:0000312" key="9">
    <source>
        <dbReference type="EMBL" id="AAT47064.1"/>
    </source>
</evidence>
<evidence type="ECO:0000312" key="10">
    <source>
        <dbReference type="EMBL" id="BAF18369.1"/>
    </source>
</evidence>
<organism>
    <name type="scientific">Oryza sativa subsp. japonica</name>
    <name type="common">Rice</name>
    <dbReference type="NCBI Taxonomy" id="39947"/>
    <lineage>
        <taxon>Eukaryota</taxon>
        <taxon>Viridiplantae</taxon>
        <taxon>Streptophyta</taxon>
        <taxon>Embryophyta</taxon>
        <taxon>Tracheophyta</taxon>
        <taxon>Spermatophyta</taxon>
        <taxon>Magnoliopsida</taxon>
        <taxon>Liliopsida</taxon>
        <taxon>Poales</taxon>
        <taxon>Poaceae</taxon>
        <taxon>BOP clade</taxon>
        <taxon>Oryzoideae</taxon>
        <taxon>Oryzeae</taxon>
        <taxon>Oryzinae</taxon>
        <taxon>Oryza</taxon>
        <taxon>Oryza sativa</taxon>
    </lineage>
</organism>
<protein>
    <recommendedName>
        <fullName evidence="8">Calcium-dependent protein kinase 15</fullName>
        <shortName evidence="8">OsCDPK15</shortName>
        <shortName evidence="7">OsCPK15</shortName>
        <ecNumber evidence="8">2.7.11.1</ecNumber>
    </recommendedName>
</protein>
<sequence length="542" mass="61374">MGARASRHRQSPDQSQSQSPSPHHKHHHHHQTTRAPKPKPKPQPPPPQQPRSQPPPPPRHQPQQAPQQAAAEDGVGRVLGRPMEDVRATYTFGRELGRGQFGVTYLATHKPTGRRYACKSIAARKLARPDDLDDVRREVHIMHHLTGHRNIVELRGAYEDRHSVNLVMELCEGGELFDRIIARGHYSERAAAALCREIVSVVHSCHSMGVMHRDLKPENFLFLNKREDSPLKATDFGLSVFFKPGEQFRDLVGSAYYVAPEVLKRLYGAEADIWSAGVILYILLSGVPPFWAENEDGIFDAVLQGHIDFSSEPWPSISSGAKDLVKRMLRQDPKERLTAAEILNHPWIREDGEAPDKPLDITVISRMKQFRAMNKLKKVALKVVAENLSEEEIVGLKEMFKSLDTDNSGTITLEELRAGLPKLGTKISESELRQLMEAADVDGNGSIDYVEFISATMHMNRLEKEDHIYKAFEYFDKDHSGFITVDELEEALTKYDMGDEATIKEIIAEVDTDHDGRINYQEFVAMMKNNSPEIVPNRRRMF</sequence>
<comment type="function">
    <text evidence="1">May play a role in signal transduction pathways that involve calcium as a second messenger.</text>
</comment>
<comment type="catalytic activity">
    <reaction evidence="8">
        <text>L-seryl-[protein] + ATP = O-phospho-L-seryl-[protein] + ADP + H(+)</text>
        <dbReference type="Rhea" id="RHEA:17989"/>
        <dbReference type="Rhea" id="RHEA-COMP:9863"/>
        <dbReference type="Rhea" id="RHEA-COMP:11604"/>
        <dbReference type="ChEBI" id="CHEBI:15378"/>
        <dbReference type="ChEBI" id="CHEBI:29999"/>
        <dbReference type="ChEBI" id="CHEBI:30616"/>
        <dbReference type="ChEBI" id="CHEBI:83421"/>
        <dbReference type="ChEBI" id="CHEBI:456216"/>
        <dbReference type="EC" id="2.7.11.1"/>
    </reaction>
</comment>
<comment type="catalytic activity">
    <reaction evidence="8">
        <text>L-threonyl-[protein] + ATP = O-phospho-L-threonyl-[protein] + ADP + H(+)</text>
        <dbReference type="Rhea" id="RHEA:46608"/>
        <dbReference type="Rhea" id="RHEA-COMP:11060"/>
        <dbReference type="Rhea" id="RHEA-COMP:11605"/>
        <dbReference type="ChEBI" id="CHEBI:15378"/>
        <dbReference type="ChEBI" id="CHEBI:30013"/>
        <dbReference type="ChEBI" id="CHEBI:30616"/>
        <dbReference type="ChEBI" id="CHEBI:61977"/>
        <dbReference type="ChEBI" id="CHEBI:456216"/>
        <dbReference type="EC" id="2.7.11.1"/>
    </reaction>
</comment>
<comment type="activity regulation">
    <text evidence="1">Activated by calcium. Autophosphorylation may play an important role in the regulation of the kinase activity.</text>
</comment>
<comment type="subcellular location">
    <subcellularLocation>
        <location evidence="8">Membrane</location>
        <topology evidence="8">Lipid-anchor</topology>
    </subcellularLocation>
</comment>
<comment type="induction">
    <text evidence="6">By N-acetylchitooligosaccharide elicitor.</text>
</comment>
<comment type="domain">
    <text evidence="1">There are 3 contiguous domains conserved in the CDPK subfamily: a kinase domain, an autoinhibitory (junction) domain and a calmodulin-like domain. The autoinhibitory domain (354-384) inactivates kinase activity under calcium-free conditions.</text>
</comment>
<comment type="similarity">
    <text evidence="8">Belongs to the protein kinase superfamily. Ser/Thr protein kinase family. CDPK subfamily.</text>
</comment>
<accession>Q6I587</accession>
<name>CDPKF_ORYSJ</name>
<reference key="1">
    <citation type="journal article" date="2005" name="Mol. Genet. Genomics">
        <title>A fine physical map of the rice chromosome 5.</title>
        <authorList>
            <person name="Cheng C.-H."/>
            <person name="Chung M.C."/>
            <person name="Liu S.-M."/>
            <person name="Chen S.-K."/>
            <person name="Kao F.Y."/>
            <person name="Lin S.-J."/>
            <person name="Hsiao S.-H."/>
            <person name="Tseng I.C."/>
            <person name="Hsing Y.-I.C."/>
            <person name="Wu H.-P."/>
            <person name="Chen C.-S."/>
            <person name="Shaw J.-F."/>
            <person name="Wu J."/>
            <person name="Matsumoto T."/>
            <person name="Sasaki T."/>
            <person name="Chen H.-C."/>
            <person name="Chow T.-Y."/>
        </authorList>
    </citation>
    <scope>NUCLEOTIDE SEQUENCE [LARGE SCALE GENOMIC DNA]</scope>
    <source>
        <strain>cv. Nipponbare</strain>
    </source>
</reference>
<reference key="2">
    <citation type="journal article" date="2005" name="Nature">
        <title>The map-based sequence of the rice genome.</title>
        <authorList>
            <consortium name="International rice genome sequencing project (IRGSP)"/>
        </authorList>
    </citation>
    <scope>NUCLEOTIDE SEQUENCE [LARGE SCALE GENOMIC DNA]</scope>
    <source>
        <strain>cv. Nipponbare</strain>
    </source>
</reference>
<reference key="3">
    <citation type="journal article" date="2008" name="Nucleic Acids Res.">
        <title>The rice annotation project database (RAP-DB): 2008 update.</title>
        <authorList>
            <consortium name="The rice annotation project (RAP)"/>
        </authorList>
    </citation>
    <scope>GENOME REANNOTATION</scope>
    <source>
        <strain>cv. Nipponbare</strain>
    </source>
</reference>
<reference key="4">
    <citation type="journal article" date="2013" name="Rice">
        <title>Improvement of the Oryza sativa Nipponbare reference genome using next generation sequence and optical map data.</title>
        <authorList>
            <person name="Kawahara Y."/>
            <person name="de la Bastide M."/>
            <person name="Hamilton J.P."/>
            <person name="Kanamori H."/>
            <person name="McCombie W.R."/>
            <person name="Ouyang S."/>
            <person name="Schwartz D.C."/>
            <person name="Tanaka T."/>
            <person name="Wu J."/>
            <person name="Zhou S."/>
            <person name="Childs K.L."/>
            <person name="Davidson R.M."/>
            <person name="Lin H."/>
            <person name="Quesada-Ocampo L."/>
            <person name="Vaillancourt B."/>
            <person name="Sakai H."/>
            <person name="Lee S.S."/>
            <person name="Kim J."/>
            <person name="Numa H."/>
            <person name="Itoh T."/>
            <person name="Buell C.R."/>
            <person name="Matsumoto T."/>
        </authorList>
    </citation>
    <scope>GENOME REANNOTATION</scope>
    <source>
        <strain>cv. Nipponbare</strain>
    </source>
</reference>
<reference key="5">
    <citation type="journal article" date="2003" name="Plant Mol. Biol.">
        <title>Rice gene expression in response to N-acetylchitooligosaccharide elicitor: comprehensive analysis by DNA microarray with randomly selected ESTs.</title>
        <authorList>
            <person name="Akimoto-Tomiyama C."/>
            <person name="Sakata K."/>
            <person name="Yazaki J."/>
            <person name="Nakamura K."/>
            <person name="Fujii F."/>
            <person name="Shimbo K."/>
            <person name="Yamamoto K."/>
            <person name="Sasaki T."/>
            <person name="Kishimoto N."/>
            <person name="Kikuchi S."/>
            <person name="Shibuya N."/>
            <person name="Minami E."/>
        </authorList>
    </citation>
    <scope>INDUCTION BY N-ACETYLCHITOOLIGOSACCHARIDE ELICITOR</scope>
</reference>
<reference key="6">
    <citation type="journal article" date="2005" name="Plant Cell Physiol.">
        <title>Genome-wide identification of the rice calcium-dependent protein kinase and its closely related kinase gene families: comprehensive analysis of the CDPKs gene family in rice.</title>
        <authorList>
            <person name="Asano T."/>
            <person name="Tanaka N."/>
            <person name="Yang G."/>
            <person name="Hayashi N."/>
            <person name="Komatsu S."/>
        </authorList>
    </citation>
    <scope>GENE FAMILY</scope>
    <scope>NOMENCLATURE</scope>
</reference>
<proteinExistence type="evidence at transcript level"/>